<organism>
    <name type="scientific">Synechococcus sp. (strain WH7803)</name>
    <dbReference type="NCBI Taxonomy" id="32051"/>
    <lineage>
        <taxon>Bacteria</taxon>
        <taxon>Bacillati</taxon>
        <taxon>Cyanobacteriota</taxon>
        <taxon>Cyanophyceae</taxon>
        <taxon>Synechococcales</taxon>
        <taxon>Synechococcaceae</taxon>
        <taxon>Synechococcus</taxon>
    </lineage>
</organism>
<proteinExistence type="inferred from homology"/>
<keyword id="KW-1185">Reference proteome</keyword>
<keyword id="KW-0687">Ribonucleoprotein</keyword>
<keyword id="KW-0689">Ribosomal protein</keyword>
<gene>
    <name evidence="1" type="primary">rplL</name>
    <name evidence="1" type="synonym">rpl12</name>
    <name type="ordered locus">SynWH7803_2371</name>
</gene>
<name>RL7_SYNPW</name>
<evidence type="ECO:0000255" key="1">
    <source>
        <dbReference type="HAMAP-Rule" id="MF_00368"/>
    </source>
</evidence>
<evidence type="ECO:0000305" key="2"/>
<comment type="function">
    <text evidence="1">Forms part of the ribosomal stalk which helps the ribosome interact with GTP-bound translation factors. Is thus essential for accurate translation.</text>
</comment>
<comment type="subunit">
    <text evidence="1">Homodimer. Part of the ribosomal stalk of the 50S ribosomal subunit. Forms a multimeric L10(L12)X complex, where L10 forms an elongated spine to which 2 to 4 L12 dimers bind in a sequential fashion. Binds GTP-bound translation factors.</text>
</comment>
<comment type="similarity">
    <text evidence="1">Belongs to the bacterial ribosomal protein bL12 family.</text>
</comment>
<protein>
    <recommendedName>
        <fullName evidence="1">Large ribosomal subunit protein bL12</fullName>
    </recommendedName>
    <alternativeName>
        <fullName evidence="2">50S ribosomal protein L7/L12</fullName>
    </alternativeName>
</protein>
<accession>A5GPD2</accession>
<sequence length="130" mass="13146">MSAKTDEILESLKTLSLLEASELVKQIEEAFGVSAAASAGVVMAAPGAAGAGGGEAAEEKTEFDVVLESFDASAKIKVLKAVREATGLGLGDAKAMVEAAPKAIKEGVSKDEAEALKKAIEEVGGKVTLK</sequence>
<reference key="1">
    <citation type="submission" date="2006-05" db="EMBL/GenBank/DDBJ databases">
        <authorList>
            <consortium name="Genoscope"/>
        </authorList>
    </citation>
    <scope>NUCLEOTIDE SEQUENCE [LARGE SCALE GENOMIC DNA]</scope>
    <source>
        <strain>WH7803</strain>
    </source>
</reference>
<feature type="chain" id="PRO_1000007102" description="Large ribosomal subunit protein bL12">
    <location>
        <begin position="1"/>
        <end position="130"/>
    </location>
</feature>
<dbReference type="EMBL" id="CT971583">
    <property type="protein sequence ID" value="CAK24797.1"/>
    <property type="molecule type" value="Genomic_DNA"/>
</dbReference>
<dbReference type="SMR" id="A5GPD2"/>
<dbReference type="STRING" id="32051.SynWH7803_2371"/>
<dbReference type="KEGG" id="syx:SynWH7803_2371"/>
<dbReference type="eggNOG" id="COG0222">
    <property type="taxonomic scope" value="Bacteria"/>
</dbReference>
<dbReference type="HOGENOM" id="CLU_086499_3_0_3"/>
<dbReference type="OrthoDB" id="9811748at2"/>
<dbReference type="Proteomes" id="UP000001566">
    <property type="component" value="Chromosome"/>
</dbReference>
<dbReference type="GO" id="GO:0022625">
    <property type="term" value="C:cytosolic large ribosomal subunit"/>
    <property type="evidence" value="ECO:0007669"/>
    <property type="project" value="TreeGrafter"/>
</dbReference>
<dbReference type="GO" id="GO:0003729">
    <property type="term" value="F:mRNA binding"/>
    <property type="evidence" value="ECO:0007669"/>
    <property type="project" value="TreeGrafter"/>
</dbReference>
<dbReference type="GO" id="GO:0003735">
    <property type="term" value="F:structural constituent of ribosome"/>
    <property type="evidence" value="ECO:0007669"/>
    <property type="project" value="InterPro"/>
</dbReference>
<dbReference type="GO" id="GO:0006412">
    <property type="term" value="P:translation"/>
    <property type="evidence" value="ECO:0007669"/>
    <property type="project" value="UniProtKB-UniRule"/>
</dbReference>
<dbReference type="CDD" id="cd00387">
    <property type="entry name" value="Ribosomal_L7_L12"/>
    <property type="match status" value="1"/>
</dbReference>
<dbReference type="FunFam" id="3.30.1390.10:FF:000001">
    <property type="entry name" value="50S ribosomal protein L7/L12"/>
    <property type="match status" value="1"/>
</dbReference>
<dbReference type="Gene3D" id="3.30.1390.10">
    <property type="match status" value="1"/>
</dbReference>
<dbReference type="Gene3D" id="1.20.5.710">
    <property type="entry name" value="Single helix bin"/>
    <property type="match status" value="1"/>
</dbReference>
<dbReference type="HAMAP" id="MF_00368">
    <property type="entry name" value="Ribosomal_bL12"/>
    <property type="match status" value="1"/>
</dbReference>
<dbReference type="InterPro" id="IPR000206">
    <property type="entry name" value="Ribosomal_bL12"/>
</dbReference>
<dbReference type="InterPro" id="IPR013823">
    <property type="entry name" value="Ribosomal_bL12_C"/>
</dbReference>
<dbReference type="InterPro" id="IPR014719">
    <property type="entry name" value="Ribosomal_bL12_C/ClpS-like"/>
</dbReference>
<dbReference type="InterPro" id="IPR008932">
    <property type="entry name" value="Ribosomal_bL12_oligo"/>
</dbReference>
<dbReference type="InterPro" id="IPR036235">
    <property type="entry name" value="Ribosomal_bL12_oligo_N_sf"/>
</dbReference>
<dbReference type="NCBIfam" id="TIGR00855">
    <property type="entry name" value="L12"/>
    <property type="match status" value="1"/>
</dbReference>
<dbReference type="PANTHER" id="PTHR45987">
    <property type="entry name" value="39S RIBOSOMAL PROTEIN L12"/>
    <property type="match status" value="1"/>
</dbReference>
<dbReference type="PANTHER" id="PTHR45987:SF4">
    <property type="entry name" value="LARGE RIBOSOMAL SUBUNIT PROTEIN BL12M"/>
    <property type="match status" value="1"/>
</dbReference>
<dbReference type="Pfam" id="PF00542">
    <property type="entry name" value="Ribosomal_L12"/>
    <property type="match status" value="1"/>
</dbReference>
<dbReference type="Pfam" id="PF16320">
    <property type="entry name" value="Ribosomal_L12_N"/>
    <property type="match status" value="1"/>
</dbReference>
<dbReference type="SUPFAM" id="SSF54736">
    <property type="entry name" value="ClpS-like"/>
    <property type="match status" value="1"/>
</dbReference>
<dbReference type="SUPFAM" id="SSF48300">
    <property type="entry name" value="Ribosomal protein L7/12, oligomerisation (N-terminal) domain"/>
    <property type="match status" value="1"/>
</dbReference>